<comment type="function">
    <text evidence="1">Catalyzes the hydrolysis of the adenine ring of phosphoribosyl-AMP.</text>
</comment>
<comment type="catalytic activity">
    <reaction evidence="1">
        <text>1-(5-phospho-beta-D-ribosyl)-5'-AMP + H2O = 1-(5-phospho-beta-D-ribosyl)-5-[(5-phospho-beta-D-ribosylamino)methylideneamino]imidazole-4-carboxamide</text>
        <dbReference type="Rhea" id="RHEA:20049"/>
        <dbReference type="ChEBI" id="CHEBI:15377"/>
        <dbReference type="ChEBI" id="CHEBI:58435"/>
        <dbReference type="ChEBI" id="CHEBI:59457"/>
        <dbReference type="EC" id="3.5.4.19"/>
    </reaction>
</comment>
<comment type="cofactor">
    <cofactor evidence="1">
        <name>Mg(2+)</name>
        <dbReference type="ChEBI" id="CHEBI:18420"/>
    </cofactor>
    <text evidence="1">Binds 1 Mg(2+) ion per subunit.</text>
</comment>
<comment type="cofactor">
    <cofactor evidence="1">
        <name>Zn(2+)</name>
        <dbReference type="ChEBI" id="CHEBI:29105"/>
    </cofactor>
    <text evidence="1">Binds 1 zinc ion per subunit.</text>
</comment>
<comment type="pathway">
    <text evidence="1">Amino-acid biosynthesis; L-histidine biosynthesis; L-histidine from 5-phospho-alpha-D-ribose 1-diphosphate: step 3/9.</text>
</comment>
<comment type="subunit">
    <text evidence="1">Homodimer.</text>
</comment>
<comment type="subcellular location">
    <subcellularLocation>
        <location evidence="1">Cytoplasm</location>
    </subcellularLocation>
</comment>
<comment type="similarity">
    <text evidence="1">Belongs to the PRA-CH family.</text>
</comment>
<feature type="chain" id="PRO_0000319724" description="Phosphoribosyl-AMP cyclohydrolase">
    <location>
        <begin position="1"/>
        <end position="108"/>
    </location>
</feature>
<feature type="binding site" evidence="1">
    <location>
        <position position="78"/>
    </location>
    <ligand>
        <name>Mg(2+)</name>
        <dbReference type="ChEBI" id="CHEBI:18420"/>
    </ligand>
</feature>
<feature type="binding site" evidence="1">
    <location>
        <position position="79"/>
    </location>
    <ligand>
        <name>Zn(2+)</name>
        <dbReference type="ChEBI" id="CHEBI:29105"/>
        <note>ligand shared between dimeric partners</note>
    </ligand>
</feature>
<feature type="binding site" evidence="1">
    <location>
        <position position="80"/>
    </location>
    <ligand>
        <name>Mg(2+)</name>
        <dbReference type="ChEBI" id="CHEBI:18420"/>
    </ligand>
</feature>
<feature type="binding site" evidence="1">
    <location>
        <position position="82"/>
    </location>
    <ligand>
        <name>Mg(2+)</name>
        <dbReference type="ChEBI" id="CHEBI:18420"/>
    </ligand>
</feature>
<feature type="binding site" evidence="1">
    <location>
        <position position="95"/>
    </location>
    <ligand>
        <name>Zn(2+)</name>
        <dbReference type="ChEBI" id="CHEBI:29105"/>
        <note>ligand shared between dimeric partners</note>
    </ligand>
</feature>
<feature type="binding site" evidence="1">
    <location>
        <position position="102"/>
    </location>
    <ligand>
        <name>Zn(2+)</name>
        <dbReference type="ChEBI" id="CHEBI:29105"/>
        <note>ligand shared between dimeric partners</note>
    </ligand>
</feature>
<proteinExistence type="inferred from homology"/>
<organism>
    <name type="scientific">Cenarchaeum symbiosum (strain A)</name>
    <dbReference type="NCBI Taxonomy" id="414004"/>
    <lineage>
        <taxon>Archaea</taxon>
        <taxon>Nitrososphaerota</taxon>
        <taxon>Candidatus Cenarchaeales</taxon>
        <taxon>Candidatus Cenarchaeaceae</taxon>
        <taxon>Candidatus Cenarchaeum</taxon>
    </lineage>
</organism>
<protein>
    <recommendedName>
        <fullName evidence="1">Phosphoribosyl-AMP cyclohydrolase</fullName>
        <shortName evidence="1">PRA-CH</shortName>
        <ecNumber evidence="1">3.5.4.19</ecNumber>
    </recommendedName>
</protein>
<accession>A0RZ79</accession>
<dbReference type="EC" id="3.5.4.19" evidence="1"/>
<dbReference type="EMBL" id="DP000238">
    <property type="protein sequence ID" value="ABK78646.1"/>
    <property type="molecule type" value="Genomic_DNA"/>
</dbReference>
<dbReference type="SMR" id="A0RZ79"/>
<dbReference type="STRING" id="414004.CENSYa_2043"/>
<dbReference type="EnsemblBacteria" id="ABK78646">
    <property type="protein sequence ID" value="ABK78646"/>
    <property type="gene ID" value="CENSYa_2043"/>
</dbReference>
<dbReference type="KEGG" id="csy:CENSYa_2043"/>
<dbReference type="PATRIC" id="fig|414004.10.peg.1875"/>
<dbReference type="HOGENOM" id="CLU_048577_5_3_2"/>
<dbReference type="UniPathway" id="UPA00031">
    <property type="reaction ID" value="UER00008"/>
</dbReference>
<dbReference type="Proteomes" id="UP000000758">
    <property type="component" value="Chromosome"/>
</dbReference>
<dbReference type="GO" id="GO:0005737">
    <property type="term" value="C:cytoplasm"/>
    <property type="evidence" value="ECO:0007669"/>
    <property type="project" value="UniProtKB-SubCell"/>
</dbReference>
<dbReference type="GO" id="GO:0000287">
    <property type="term" value="F:magnesium ion binding"/>
    <property type="evidence" value="ECO:0007669"/>
    <property type="project" value="UniProtKB-UniRule"/>
</dbReference>
<dbReference type="GO" id="GO:0004635">
    <property type="term" value="F:phosphoribosyl-AMP cyclohydrolase activity"/>
    <property type="evidence" value="ECO:0007669"/>
    <property type="project" value="UniProtKB-UniRule"/>
</dbReference>
<dbReference type="GO" id="GO:0008270">
    <property type="term" value="F:zinc ion binding"/>
    <property type="evidence" value="ECO:0007669"/>
    <property type="project" value="UniProtKB-UniRule"/>
</dbReference>
<dbReference type="GO" id="GO:0000105">
    <property type="term" value="P:L-histidine biosynthetic process"/>
    <property type="evidence" value="ECO:0007669"/>
    <property type="project" value="UniProtKB-UniRule"/>
</dbReference>
<dbReference type="FunFam" id="3.10.20.810:FF:000001">
    <property type="entry name" value="Histidine biosynthesis bifunctional protein HisIE"/>
    <property type="match status" value="1"/>
</dbReference>
<dbReference type="Gene3D" id="3.10.20.810">
    <property type="entry name" value="Phosphoribosyl-AMP cyclohydrolase"/>
    <property type="match status" value="1"/>
</dbReference>
<dbReference type="HAMAP" id="MF_01021">
    <property type="entry name" value="HisI"/>
    <property type="match status" value="1"/>
</dbReference>
<dbReference type="InterPro" id="IPR026660">
    <property type="entry name" value="PRA-CH"/>
</dbReference>
<dbReference type="InterPro" id="IPR002496">
    <property type="entry name" value="PRib_AMP_CycHydrolase_dom"/>
</dbReference>
<dbReference type="InterPro" id="IPR038019">
    <property type="entry name" value="PRib_AMP_CycHydrolase_sf"/>
</dbReference>
<dbReference type="NCBIfam" id="NF000768">
    <property type="entry name" value="PRK00051.1"/>
    <property type="match status" value="1"/>
</dbReference>
<dbReference type="PANTHER" id="PTHR42945">
    <property type="entry name" value="HISTIDINE BIOSYNTHESIS BIFUNCTIONAL PROTEIN"/>
    <property type="match status" value="1"/>
</dbReference>
<dbReference type="PANTHER" id="PTHR42945:SF1">
    <property type="entry name" value="HISTIDINE BIOSYNTHESIS BIFUNCTIONAL PROTEIN HIS7"/>
    <property type="match status" value="1"/>
</dbReference>
<dbReference type="Pfam" id="PF01502">
    <property type="entry name" value="PRA-CH"/>
    <property type="match status" value="1"/>
</dbReference>
<dbReference type="SUPFAM" id="SSF141734">
    <property type="entry name" value="HisI-like"/>
    <property type="match status" value="1"/>
</dbReference>
<keyword id="KW-0028">Amino-acid biosynthesis</keyword>
<keyword id="KW-0963">Cytoplasm</keyword>
<keyword id="KW-0368">Histidine biosynthesis</keyword>
<keyword id="KW-0378">Hydrolase</keyword>
<keyword id="KW-0460">Magnesium</keyword>
<keyword id="KW-0479">Metal-binding</keyword>
<keyword id="KW-1185">Reference proteome</keyword>
<keyword id="KW-0862">Zinc</keyword>
<sequence>MEKKIDEIDFEKAGGIVPVIVQDNNTHEVLTLAYSNRESLELTRKTGLSWFWSRSRSKLWQKGEESGNTQQVKKILVDCDQDALIYLVEPSGPACHTGERNCFHHSLL</sequence>
<name>HIS3_CENSY</name>
<gene>
    <name evidence="1" type="primary">hisI</name>
    <name type="ordered locus">CENSYa_2043</name>
</gene>
<reference key="1">
    <citation type="journal article" date="2006" name="Proc. Natl. Acad. Sci. U.S.A.">
        <title>Genomic analysis of the uncultivated marine crenarchaeote Cenarchaeum symbiosum.</title>
        <authorList>
            <person name="Hallam S.J."/>
            <person name="Konstantinidis K.T."/>
            <person name="Putnam N."/>
            <person name="Schleper C."/>
            <person name="Watanabe Y."/>
            <person name="Sugahara J."/>
            <person name="Preston C."/>
            <person name="de la Torre J."/>
            <person name="Richardson P.M."/>
            <person name="DeLong E.F."/>
        </authorList>
    </citation>
    <scope>NUCLEOTIDE SEQUENCE [LARGE SCALE GENOMIC DNA]</scope>
    <source>
        <strain>A</strain>
    </source>
</reference>
<evidence type="ECO:0000255" key="1">
    <source>
        <dbReference type="HAMAP-Rule" id="MF_01021"/>
    </source>
</evidence>